<gene>
    <name evidence="5 6" type="primary">RBL7</name>
    <name evidence="9" type="ordered locus">At4g23070</name>
    <name evidence="10" type="ORF">F7H19.260</name>
</gene>
<evidence type="ECO:0000250" key="1">
    <source>
        <dbReference type="UniProtKB" id="P54493"/>
    </source>
</evidence>
<evidence type="ECO:0000250" key="2">
    <source>
        <dbReference type="UniProtKB" id="Q9CAN1"/>
    </source>
</evidence>
<evidence type="ECO:0000255" key="3"/>
<evidence type="ECO:0000256" key="4">
    <source>
        <dbReference type="SAM" id="MobiDB-lite"/>
    </source>
</evidence>
<evidence type="ECO:0000303" key="5">
    <source>
    </source>
</evidence>
<evidence type="ECO:0000303" key="6">
    <source>
    </source>
</evidence>
<evidence type="ECO:0000303" key="7">
    <source>
    </source>
</evidence>
<evidence type="ECO:0000305" key="8"/>
<evidence type="ECO:0000312" key="9">
    <source>
        <dbReference type="Araport" id="AT4G23070"/>
    </source>
</evidence>
<evidence type="ECO:0000312" key="10">
    <source>
        <dbReference type="EMBL" id="CAA19823.1"/>
    </source>
</evidence>
<evidence type="ECO:0000312" key="11">
    <source>
        <dbReference type="Proteomes" id="UP000006548"/>
    </source>
</evidence>
<sequence length="313" mass="34532">MLSTAAEEDPEGGSRETNNGGETTPDMQWRSWIIPIVVIANVVVFVVVMYYNDCPHKSHRCLAKFLGRFSFESFKSNPLLGPSSSTLEKMGALAWGKIVHKRQVWRLLTCMWLHAGVIHLLANMCCVAYIGVRLEQQFGFVRVGTIYLVSGFCGSILSCLFLEDAISVGASSALFGLLGAMLSELLINWTTYDNKGVAIVMLLVIVGVNLGLGTLPPVDNFAHIGGFFGGFLLGFLLLIHPQFEWEENQVSLMPGTIVKPKYNTCQLVLCIVASIVFVAGFTSGLVILFRGDSLNRYCKWCHKLSYSSKSQWT</sequence>
<accession>O82756</accession>
<proteinExistence type="inferred from homology"/>
<keyword id="KW-0378">Hydrolase</keyword>
<keyword id="KW-0472">Membrane</keyword>
<keyword id="KW-0645">Protease</keyword>
<keyword id="KW-1185">Reference proteome</keyword>
<keyword id="KW-0720">Serine protease</keyword>
<keyword id="KW-0812">Transmembrane</keyword>
<keyword id="KW-1133">Transmembrane helix</keyword>
<reference key="1">
    <citation type="journal article" date="1999" name="Nature">
        <title>Sequence and analysis of chromosome 4 of the plant Arabidopsis thaliana.</title>
        <authorList>
            <person name="Mayer K.F.X."/>
            <person name="Schueller C."/>
            <person name="Wambutt R."/>
            <person name="Murphy G."/>
            <person name="Volckaert G."/>
            <person name="Pohl T."/>
            <person name="Duesterhoeft A."/>
            <person name="Stiekema W."/>
            <person name="Entian K.-D."/>
            <person name="Terryn N."/>
            <person name="Harris B."/>
            <person name="Ansorge W."/>
            <person name="Brandt P."/>
            <person name="Grivell L.A."/>
            <person name="Rieger M."/>
            <person name="Weichselgartner M."/>
            <person name="de Simone V."/>
            <person name="Obermaier B."/>
            <person name="Mache R."/>
            <person name="Mueller M."/>
            <person name="Kreis M."/>
            <person name="Delseny M."/>
            <person name="Puigdomenech P."/>
            <person name="Watson M."/>
            <person name="Schmidtheini T."/>
            <person name="Reichert B."/>
            <person name="Portetelle D."/>
            <person name="Perez-Alonso M."/>
            <person name="Boutry M."/>
            <person name="Bancroft I."/>
            <person name="Vos P."/>
            <person name="Hoheisel J."/>
            <person name="Zimmermann W."/>
            <person name="Wedler H."/>
            <person name="Ridley P."/>
            <person name="Langham S.-A."/>
            <person name="McCullagh B."/>
            <person name="Bilham L."/>
            <person name="Robben J."/>
            <person name="van der Schueren J."/>
            <person name="Grymonprez B."/>
            <person name="Chuang Y.-J."/>
            <person name="Vandenbussche F."/>
            <person name="Braeken M."/>
            <person name="Weltjens I."/>
            <person name="Voet M."/>
            <person name="Bastiaens I."/>
            <person name="Aert R."/>
            <person name="Defoor E."/>
            <person name="Weitzenegger T."/>
            <person name="Bothe G."/>
            <person name="Ramsperger U."/>
            <person name="Hilbert H."/>
            <person name="Braun M."/>
            <person name="Holzer E."/>
            <person name="Brandt A."/>
            <person name="Peters S."/>
            <person name="van Staveren M."/>
            <person name="Dirkse W."/>
            <person name="Mooijman P."/>
            <person name="Klein Lankhorst R."/>
            <person name="Rose M."/>
            <person name="Hauf J."/>
            <person name="Koetter P."/>
            <person name="Berneiser S."/>
            <person name="Hempel S."/>
            <person name="Feldpausch M."/>
            <person name="Lamberth S."/>
            <person name="Van den Daele H."/>
            <person name="De Keyser A."/>
            <person name="Buysshaert C."/>
            <person name="Gielen J."/>
            <person name="Villarroel R."/>
            <person name="De Clercq R."/>
            <person name="van Montagu M."/>
            <person name="Rogers J."/>
            <person name="Cronin A."/>
            <person name="Quail M.A."/>
            <person name="Bray-Allen S."/>
            <person name="Clark L."/>
            <person name="Doggett J."/>
            <person name="Hall S."/>
            <person name="Kay M."/>
            <person name="Lennard N."/>
            <person name="McLay K."/>
            <person name="Mayes R."/>
            <person name="Pettett A."/>
            <person name="Rajandream M.A."/>
            <person name="Lyne M."/>
            <person name="Benes V."/>
            <person name="Rechmann S."/>
            <person name="Borkova D."/>
            <person name="Bloecker H."/>
            <person name="Scharfe M."/>
            <person name="Grimm M."/>
            <person name="Loehnert T.-H."/>
            <person name="Dose S."/>
            <person name="de Haan M."/>
            <person name="Maarse A.C."/>
            <person name="Schaefer M."/>
            <person name="Mueller-Auer S."/>
            <person name="Gabel C."/>
            <person name="Fuchs M."/>
            <person name="Fartmann B."/>
            <person name="Granderath K."/>
            <person name="Dauner D."/>
            <person name="Herzl A."/>
            <person name="Neumann S."/>
            <person name="Argiriou A."/>
            <person name="Vitale D."/>
            <person name="Liguori R."/>
            <person name="Piravandi E."/>
            <person name="Massenet O."/>
            <person name="Quigley F."/>
            <person name="Clabauld G."/>
            <person name="Muendlein A."/>
            <person name="Felber R."/>
            <person name="Schnabl S."/>
            <person name="Hiller R."/>
            <person name="Schmidt W."/>
            <person name="Lecharny A."/>
            <person name="Aubourg S."/>
            <person name="Chefdor F."/>
            <person name="Cooke R."/>
            <person name="Berger C."/>
            <person name="Monfort A."/>
            <person name="Casacuberta E."/>
            <person name="Gibbons T."/>
            <person name="Weber N."/>
            <person name="Vandenbol M."/>
            <person name="Bargues M."/>
            <person name="Terol J."/>
            <person name="Torres A."/>
            <person name="Perez-Perez A."/>
            <person name="Purnelle B."/>
            <person name="Bent E."/>
            <person name="Johnson S."/>
            <person name="Tacon D."/>
            <person name="Jesse T."/>
            <person name="Heijnen L."/>
            <person name="Schwarz S."/>
            <person name="Scholler P."/>
            <person name="Heber S."/>
            <person name="Francs P."/>
            <person name="Bielke C."/>
            <person name="Frishman D."/>
            <person name="Haase D."/>
            <person name="Lemcke K."/>
            <person name="Mewes H.-W."/>
            <person name="Stocker S."/>
            <person name="Zaccaria P."/>
            <person name="Bevan M."/>
            <person name="Wilson R.K."/>
            <person name="de la Bastide M."/>
            <person name="Habermann K."/>
            <person name="Parnell L."/>
            <person name="Dedhia N."/>
            <person name="Gnoj L."/>
            <person name="Schutz K."/>
            <person name="Huang E."/>
            <person name="Spiegel L."/>
            <person name="Sekhon M."/>
            <person name="Murray J."/>
            <person name="Sheet P."/>
            <person name="Cordes M."/>
            <person name="Abu-Threideh J."/>
            <person name="Stoneking T."/>
            <person name="Kalicki J."/>
            <person name="Graves T."/>
            <person name="Harmon G."/>
            <person name="Edwards J."/>
            <person name="Latreille P."/>
            <person name="Courtney L."/>
            <person name="Cloud J."/>
            <person name="Abbott A."/>
            <person name="Scott K."/>
            <person name="Johnson D."/>
            <person name="Minx P."/>
            <person name="Bentley D."/>
            <person name="Fulton B."/>
            <person name="Miller N."/>
            <person name="Greco T."/>
            <person name="Kemp K."/>
            <person name="Kramer J."/>
            <person name="Fulton L."/>
            <person name="Mardis E."/>
            <person name="Dante M."/>
            <person name="Pepin K."/>
            <person name="Hillier L.W."/>
            <person name="Nelson J."/>
            <person name="Spieth J."/>
            <person name="Ryan E."/>
            <person name="Andrews S."/>
            <person name="Geisel C."/>
            <person name="Layman D."/>
            <person name="Du H."/>
            <person name="Ali J."/>
            <person name="Berghoff A."/>
            <person name="Jones K."/>
            <person name="Drone K."/>
            <person name="Cotton M."/>
            <person name="Joshu C."/>
            <person name="Antonoiu B."/>
            <person name="Zidanic M."/>
            <person name="Strong C."/>
            <person name="Sun H."/>
            <person name="Lamar B."/>
            <person name="Yordan C."/>
            <person name="Ma P."/>
            <person name="Zhong J."/>
            <person name="Preston R."/>
            <person name="Vil D."/>
            <person name="Shekher M."/>
            <person name="Matero A."/>
            <person name="Shah R."/>
            <person name="Swaby I.K."/>
            <person name="O'Shaughnessy A."/>
            <person name="Rodriguez M."/>
            <person name="Hoffman J."/>
            <person name="Till S."/>
            <person name="Granat S."/>
            <person name="Shohdy N."/>
            <person name="Hasegawa A."/>
            <person name="Hameed A."/>
            <person name="Lodhi M."/>
            <person name="Johnson A."/>
            <person name="Chen E."/>
            <person name="Marra M.A."/>
            <person name="Martienssen R."/>
            <person name="McCombie W.R."/>
        </authorList>
    </citation>
    <scope>NUCLEOTIDE SEQUENCE [LARGE SCALE GENOMIC DNA]</scope>
    <source>
        <strain>cv. Columbia</strain>
    </source>
</reference>
<reference key="2">
    <citation type="journal article" date="2017" name="Plant J.">
        <title>Araport11: a complete reannotation of the Arabidopsis thaliana reference genome.</title>
        <authorList>
            <person name="Cheng C.Y."/>
            <person name="Krishnakumar V."/>
            <person name="Chan A.P."/>
            <person name="Thibaud-Nissen F."/>
            <person name="Schobel S."/>
            <person name="Town C.D."/>
        </authorList>
    </citation>
    <scope>GENOME REANNOTATION</scope>
    <source>
        <strain>cv. Columbia</strain>
    </source>
</reference>
<reference key="3">
    <citation type="journal article" date="2005" name="FEBS Lett.">
        <title>An Arabidopsis Rhomboid homolog is an intramembrane protease in plants.</title>
        <authorList>
            <person name="Kanaoka M.M."/>
            <person name="Urban S."/>
            <person name="Freeman M."/>
            <person name="Okada K."/>
        </authorList>
    </citation>
    <scope>GENE FAMILY</scope>
    <scope>NOMENCLATURE</scope>
    <source>
        <strain>cv. Columbia</strain>
    </source>
</reference>
<reference key="4">
    <citation type="journal article" date="2006" name="BMC Genomics">
        <title>Cross genome comparisons of serine proteases in Arabidopsis and rice.</title>
        <authorList>
            <person name="Tripathi L.P."/>
            <person name="Sowdhamini R."/>
        </authorList>
    </citation>
    <scope>GENE FAMILY</scope>
    <scope>NOMENCLATURE</scope>
</reference>
<reference key="5">
    <citation type="journal article" date="2006" name="BMC Plant Biol.">
        <title>Protease gene families in Populus and Arabidopsis.</title>
        <authorList>
            <person name="Garcia-Lorenzo M."/>
            <person name="Sjodin A."/>
            <person name="Jansson S."/>
            <person name="Funk C."/>
        </authorList>
    </citation>
    <scope>GENE FAMILY</scope>
    <scope>NOMENCLATURE</scope>
</reference>
<reference key="6">
    <citation type="journal article" date="2007" name="Genome Res.">
        <title>Functional and evolutionary implications of enhanced genomic analysis of rhomboid intramembrane proteases.</title>
        <authorList>
            <person name="Lemberg M.K."/>
            <person name="Freeman M."/>
        </authorList>
    </citation>
    <scope>GENE FAMILY</scope>
    <scope>NOMENCLATURE</scope>
</reference>
<reference key="7">
    <citation type="journal article" date="2012" name="Physiol. Plantarum">
        <title>Rhomboid proteases in plants - still in square one?</title>
        <authorList>
            <person name="Knopf R.R."/>
            <person name="Adam Z."/>
        </authorList>
    </citation>
    <scope>REVIEW</scope>
</reference>
<protein>
    <recommendedName>
        <fullName evidence="5 6">RHOMBOID-like protein 7</fullName>
        <shortName evidence="5 6">AtRBL7</shortName>
        <ecNumber evidence="2">3.4.21.105</ecNumber>
    </recommendedName>
</protein>
<organism evidence="11">
    <name type="scientific">Arabidopsis thaliana</name>
    <name type="common">Mouse-ear cress</name>
    <dbReference type="NCBI Taxonomy" id="3702"/>
    <lineage>
        <taxon>Eukaryota</taxon>
        <taxon>Viridiplantae</taxon>
        <taxon>Streptophyta</taxon>
        <taxon>Embryophyta</taxon>
        <taxon>Tracheophyta</taxon>
        <taxon>Spermatophyta</taxon>
        <taxon>Magnoliopsida</taxon>
        <taxon>eudicotyledons</taxon>
        <taxon>Gunneridae</taxon>
        <taxon>Pentapetalae</taxon>
        <taxon>rosids</taxon>
        <taxon>malvids</taxon>
        <taxon>Brassicales</taxon>
        <taxon>Brassicaceae</taxon>
        <taxon>Camelineae</taxon>
        <taxon>Arabidopsis</taxon>
    </lineage>
</organism>
<feature type="chain" id="PRO_0000433328" description="RHOMBOID-like protein 7">
    <location>
        <begin position="1"/>
        <end position="313"/>
    </location>
</feature>
<feature type="transmembrane region" description="Helical" evidence="3">
    <location>
        <begin position="31"/>
        <end position="51"/>
    </location>
</feature>
<feature type="transmembrane region" description="Helical" evidence="3">
    <location>
        <begin position="112"/>
        <end position="132"/>
    </location>
</feature>
<feature type="transmembrane region" description="Helical" evidence="3">
    <location>
        <begin position="143"/>
        <end position="163"/>
    </location>
</feature>
<feature type="transmembrane region" description="Helical" evidence="3">
    <location>
        <begin position="166"/>
        <end position="186"/>
    </location>
</feature>
<feature type="transmembrane region" description="Helical" evidence="3">
    <location>
        <begin position="196"/>
        <end position="216"/>
    </location>
</feature>
<feature type="transmembrane region" description="Helical" evidence="3">
    <location>
        <begin position="221"/>
        <end position="241"/>
    </location>
</feature>
<feature type="transmembrane region" description="Helical" evidence="3">
    <location>
        <begin position="269"/>
        <end position="289"/>
    </location>
</feature>
<feature type="region of interest" description="Disordered" evidence="4">
    <location>
        <begin position="1"/>
        <end position="24"/>
    </location>
</feature>
<feature type="compositionally biased region" description="Acidic residues" evidence="4">
    <location>
        <begin position="1"/>
        <end position="11"/>
    </location>
</feature>
<feature type="compositionally biased region" description="Polar residues" evidence="4">
    <location>
        <begin position="15"/>
        <end position="24"/>
    </location>
</feature>
<feature type="active site" description="Nucleophile" evidence="1">
    <location>
        <position position="171"/>
    </location>
</feature>
<feature type="active site" description="Charge relay system" evidence="1">
    <location>
        <position position="223"/>
    </location>
</feature>
<dbReference type="EC" id="3.4.21.105" evidence="2"/>
<dbReference type="EMBL" id="AL031018">
    <property type="protein sequence ID" value="CAA19823.1"/>
    <property type="molecule type" value="Genomic_DNA"/>
</dbReference>
<dbReference type="EMBL" id="AL161558">
    <property type="protein sequence ID" value="CAB79262.1"/>
    <property type="molecule type" value="Genomic_DNA"/>
</dbReference>
<dbReference type="EMBL" id="CP002687">
    <property type="protein sequence ID" value="AEE84702.1"/>
    <property type="molecule type" value="Genomic_DNA"/>
</dbReference>
<dbReference type="PIR" id="T05139">
    <property type="entry name" value="T05139"/>
</dbReference>
<dbReference type="RefSeq" id="NP_194038.1">
    <property type="nucleotide sequence ID" value="NM_118436.2"/>
</dbReference>
<dbReference type="SMR" id="O82756"/>
<dbReference type="IntAct" id="O82756">
    <property type="interactions" value="1"/>
</dbReference>
<dbReference type="MEROPS" id="S54.A03"/>
<dbReference type="PaxDb" id="3702-AT4G23070.1"/>
<dbReference type="EnsemblPlants" id="AT4G23070.1">
    <property type="protein sequence ID" value="AT4G23070.1"/>
    <property type="gene ID" value="AT4G23070"/>
</dbReference>
<dbReference type="GeneID" id="828406"/>
<dbReference type="Gramene" id="AT4G23070.1">
    <property type="protein sequence ID" value="AT4G23070.1"/>
    <property type="gene ID" value="AT4G23070"/>
</dbReference>
<dbReference type="KEGG" id="ath:AT4G23070"/>
<dbReference type="Araport" id="AT4G23070"/>
<dbReference type="TAIR" id="AT4G23070">
    <property type="gene designation" value="RBL7"/>
</dbReference>
<dbReference type="eggNOG" id="KOG2289">
    <property type="taxonomic scope" value="Eukaryota"/>
</dbReference>
<dbReference type="HOGENOM" id="CLU_011531_0_0_1"/>
<dbReference type="InParanoid" id="O82756"/>
<dbReference type="OMA" id="EWEENRV"/>
<dbReference type="OrthoDB" id="418595at2759"/>
<dbReference type="PhylomeDB" id="O82756"/>
<dbReference type="PRO" id="PR:O82756"/>
<dbReference type="Proteomes" id="UP000006548">
    <property type="component" value="Chromosome 4"/>
</dbReference>
<dbReference type="ExpressionAtlas" id="O82756">
    <property type="expression patterns" value="baseline and differential"/>
</dbReference>
<dbReference type="GO" id="GO:0016020">
    <property type="term" value="C:membrane"/>
    <property type="evidence" value="ECO:0007669"/>
    <property type="project" value="UniProtKB-SubCell"/>
</dbReference>
<dbReference type="GO" id="GO:0004252">
    <property type="term" value="F:serine-type endopeptidase activity"/>
    <property type="evidence" value="ECO:0007669"/>
    <property type="project" value="InterPro"/>
</dbReference>
<dbReference type="GO" id="GO:0006508">
    <property type="term" value="P:proteolysis"/>
    <property type="evidence" value="ECO:0007669"/>
    <property type="project" value="UniProtKB-KW"/>
</dbReference>
<dbReference type="FunFam" id="1.20.1540.10:FF:000019">
    <property type="entry name" value="RHOMBOID-like protein"/>
    <property type="match status" value="1"/>
</dbReference>
<dbReference type="Gene3D" id="1.20.1540.10">
    <property type="entry name" value="Rhomboid-like"/>
    <property type="match status" value="1"/>
</dbReference>
<dbReference type="InterPro" id="IPR002610">
    <property type="entry name" value="Peptidase_S54_rhomboid-like"/>
</dbReference>
<dbReference type="InterPro" id="IPR022764">
    <property type="entry name" value="Peptidase_S54_rhomboid_dom"/>
</dbReference>
<dbReference type="InterPro" id="IPR035952">
    <property type="entry name" value="Rhomboid-like_sf"/>
</dbReference>
<dbReference type="PANTHER" id="PTHR22936:SF94">
    <property type="entry name" value="RHOMBOID-LIKE PROTEIN 7"/>
    <property type="match status" value="1"/>
</dbReference>
<dbReference type="PANTHER" id="PTHR22936">
    <property type="entry name" value="RHOMBOID-RELATED"/>
    <property type="match status" value="1"/>
</dbReference>
<dbReference type="Pfam" id="PF01694">
    <property type="entry name" value="Rhomboid"/>
    <property type="match status" value="1"/>
</dbReference>
<dbReference type="SUPFAM" id="SSF144091">
    <property type="entry name" value="Rhomboid-like"/>
    <property type="match status" value="1"/>
</dbReference>
<name>RBL7_ARATH</name>
<comment type="function">
    <text evidence="7">Probable rhomboid-type serine protease that catalyzes intramembrane proteolysis. May function in embryo development.</text>
</comment>
<comment type="catalytic activity">
    <reaction evidence="2">
        <text>Cleaves type-1 transmembrane domains using a catalytic dyad composed of serine and histidine that are contributed by different transmembrane domains.</text>
        <dbReference type="EC" id="3.4.21.105"/>
    </reaction>
</comment>
<comment type="subcellular location">
    <subcellularLocation>
        <location evidence="3">Membrane</location>
        <topology evidence="3">Multi-pass membrane protein</topology>
    </subcellularLocation>
</comment>
<comment type="similarity">
    <text evidence="8">Belongs to the peptidase S54 family.</text>
</comment>